<comment type="function">
    <text evidence="1">Cell wall formation.</text>
</comment>
<comment type="catalytic activity">
    <reaction evidence="1">
        <text>UDP-N-acetyl-alpha-D-muramate + NADP(+) = UDP-N-acetyl-3-O-(1-carboxyvinyl)-alpha-D-glucosamine + NADPH + H(+)</text>
        <dbReference type="Rhea" id="RHEA:12248"/>
        <dbReference type="ChEBI" id="CHEBI:15378"/>
        <dbReference type="ChEBI" id="CHEBI:57783"/>
        <dbReference type="ChEBI" id="CHEBI:58349"/>
        <dbReference type="ChEBI" id="CHEBI:68483"/>
        <dbReference type="ChEBI" id="CHEBI:70757"/>
        <dbReference type="EC" id="1.3.1.98"/>
    </reaction>
</comment>
<comment type="cofactor">
    <cofactor evidence="1">
        <name>FAD</name>
        <dbReference type="ChEBI" id="CHEBI:57692"/>
    </cofactor>
</comment>
<comment type="pathway">
    <text evidence="1">Cell wall biogenesis; peptidoglycan biosynthesis.</text>
</comment>
<comment type="subcellular location">
    <subcellularLocation>
        <location evidence="1">Cytoplasm</location>
    </subcellularLocation>
</comment>
<comment type="similarity">
    <text evidence="1">Belongs to the MurB family.</text>
</comment>
<feature type="chain" id="PRO_1000117149" description="UDP-N-acetylenolpyruvoylglucosamine reductase">
    <location>
        <begin position="1"/>
        <end position="350"/>
    </location>
</feature>
<feature type="domain" description="FAD-binding PCMH-type" evidence="1">
    <location>
        <begin position="24"/>
        <end position="195"/>
    </location>
</feature>
<feature type="active site" evidence="1">
    <location>
        <position position="172"/>
    </location>
</feature>
<feature type="active site" description="Proton donor" evidence="1">
    <location>
        <position position="245"/>
    </location>
</feature>
<feature type="active site" evidence="1">
    <location>
        <position position="342"/>
    </location>
</feature>
<accession>B0RTS4</accession>
<name>MURB_XANCB</name>
<proteinExistence type="inferred from homology"/>
<protein>
    <recommendedName>
        <fullName evidence="1">UDP-N-acetylenolpyruvoylglucosamine reductase</fullName>
        <ecNumber evidence="1">1.3.1.98</ecNumber>
    </recommendedName>
    <alternativeName>
        <fullName evidence="1">UDP-N-acetylmuramate dehydrogenase</fullName>
    </alternativeName>
</protein>
<gene>
    <name evidence="1" type="primary">murB</name>
    <name type="ordered locus">xcc-b100_2478</name>
</gene>
<organism>
    <name type="scientific">Xanthomonas campestris pv. campestris (strain B100)</name>
    <dbReference type="NCBI Taxonomy" id="509169"/>
    <lineage>
        <taxon>Bacteria</taxon>
        <taxon>Pseudomonadati</taxon>
        <taxon>Pseudomonadota</taxon>
        <taxon>Gammaproteobacteria</taxon>
        <taxon>Lysobacterales</taxon>
        <taxon>Lysobacteraceae</taxon>
        <taxon>Xanthomonas</taxon>
    </lineage>
</organism>
<dbReference type="EC" id="1.3.1.98" evidence="1"/>
<dbReference type="EMBL" id="AM920689">
    <property type="protein sequence ID" value="CAP51838.1"/>
    <property type="molecule type" value="Genomic_DNA"/>
</dbReference>
<dbReference type="SMR" id="B0RTS4"/>
<dbReference type="KEGG" id="xca:xcc-b100_2478"/>
<dbReference type="HOGENOM" id="CLU_035304_0_0_6"/>
<dbReference type="UniPathway" id="UPA00219"/>
<dbReference type="Proteomes" id="UP000001188">
    <property type="component" value="Chromosome"/>
</dbReference>
<dbReference type="GO" id="GO:0005829">
    <property type="term" value="C:cytosol"/>
    <property type="evidence" value="ECO:0007669"/>
    <property type="project" value="TreeGrafter"/>
</dbReference>
<dbReference type="GO" id="GO:0071949">
    <property type="term" value="F:FAD binding"/>
    <property type="evidence" value="ECO:0007669"/>
    <property type="project" value="InterPro"/>
</dbReference>
<dbReference type="GO" id="GO:0008762">
    <property type="term" value="F:UDP-N-acetylmuramate dehydrogenase activity"/>
    <property type="evidence" value="ECO:0007669"/>
    <property type="project" value="UniProtKB-UniRule"/>
</dbReference>
<dbReference type="GO" id="GO:0051301">
    <property type="term" value="P:cell division"/>
    <property type="evidence" value="ECO:0007669"/>
    <property type="project" value="UniProtKB-KW"/>
</dbReference>
<dbReference type="GO" id="GO:0071555">
    <property type="term" value="P:cell wall organization"/>
    <property type="evidence" value="ECO:0007669"/>
    <property type="project" value="UniProtKB-KW"/>
</dbReference>
<dbReference type="GO" id="GO:0009252">
    <property type="term" value="P:peptidoglycan biosynthetic process"/>
    <property type="evidence" value="ECO:0007669"/>
    <property type="project" value="UniProtKB-UniRule"/>
</dbReference>
<dbReference type="GO" id="GO:0008360">
    <property type="term" value="P:regulation of cell shape"/>
    <property type="evidence" value="ECO:0007669"/>
    <property type="project" value="UniProtKB-KW"/>
</dbReference>
<dbReference type="Gene3D" id="3.30.465.10">
    <property type="match status" value="1"/>
</dbReference>
<dbReference type="Gene3D" id="3.90.78.10">
    <property type="entry name" value="UDP-N-acetylenolpyruvoylglucosamine reductase, C-terminal domain"/>
    <property type="match status" value="1"/>
</dbReference>
<dbReference type="Gene3D" id="3.30.43.10">
    <property type="entry name" value="Uridine Diphospho-n-acetylenolpyruvylglucosamine Reductase, domain 2"/>
    <property type="match status" value="1"/>
</dbReference>
<dbReference type="HAMAP" id="MF_00037">
    <property type="entry name" value="MurB"/>
    <property type="match status" value="1"/>
</dbReference>
<dbReference type="InterPro" id="IPR016166">
    <property type="entry name" value="FAD-bd_PCMH"/>
</dbReference>
<dbReference type="InterPro" id="IPR036318">
    <property type="entry name" value="FAD-bd_PCMH-like_sf"/>
</dbReference>
<dbReference type="InterPro" id="IPR016167">
    <property type="entry name" value="FAD-bd_PCMH_sub1"/>
</dbReference>
<dbReference type="InterPro" id="IPR016169">
    <property type="entry name" value="FAD-bd_PCMH_sub2"/>
</dbReference>
<dbReference type="InterPro" id="IPR003170">
    <property type="entry name" value="MurB"/>
</dbReference>
<dbReference type="InterPro" id="IPR011601">
    <property type="entry name" value="MurB_C"/>
</dbReference>
<dbReference type="InterPro" id="IPR036635">
    <property type="entry name" value="MurB_C_sf"/>
</dbReference>
<dbReference type="InterPro" id="IPR006094">
    <property type="entry name" value="Oxid_FAD_bind_N"/>
</dbReference>
<dbReference type="NCBIfam" id="TIGR00179">
    <property type="entry name" value="murB"/>
    <property type="match status" value="1"/>
</dbReference>
<dbReference type="NCBIfam" id="NF000755">
    <property type="entry name" value="PRK00046.1"/>
    <property type="match status" value="1"/>
</dbReference>
<dbReference type="NCBIfam" id="NF010478">
    <property type="entry name" value="PRK13903.1"/>
    <property type="match status" value="1"/>
</dbReference>
<dbReference type="PANTHER" id="PTHR21071">
    <property type="entry name" value="UDP-N-ACETYLENOLPYRUVOYLGLUCOSAMINE REDUCTASE"/>
    <property type="match status" value="1"/>
</dbReference>
<dbReference type="PANTHER" id="PTHR21071:SF4">
    <property type="entry name" value="UDP-N-ACETYLENOLPYRUVOYLGLUCOSAMINE REDUCTASE"/>
    <property type="match status" value="1"/>
</dbReference>
<dbReference type="Pfam" id="PF01565">
    <property type="entry name" value="FAD_binding_4"/>
    <property type="match status" value="1"/>
</dbReference>
<dbReference type="Pfam" id="PF02873">
    <property type="entry name" value="MurB_C"/>
    <property type="match status" value="1"/>
</dbReference>
<dbReference type="SUPFAM" id="SSF56176">
    <property type="entry name" value="FAD-binding/transporter-associated domain-like"/>
    <property type="match status" value="1"/>
</dbReference>
<dbReference type="SUPFAM" id="SSF56194">
    <property type="entry name" value="Uridine diphospho-N-Acetylenolpyruvylglucosamine reductase, MurB, C-terminal domain"/>
    <property type="match status" value="1"/>
</dbReference>
<dbReference type="PROSITE" id="PS51387">
    <property type="entry name" value="FAD_PCMH"/>
    <property type="match status" value="1"/>
</dbReference>
<sequence>MSAASPLRWQLTEHAPLRALNTFHVDATARWLLNIHAPEALPDALAAPQIAGQPLLVLGSGSNVLLAGDPPGCVLCFDNRDITIIAHHADHAIVRAGAGVNWHGLVMYSLQQGLSGLENLALIPGTVGACPIQNIGAYGAQVSDFIHVVEAYDRGSQQFVRMTPAECAFGYRDSVFKQQPDRYLIVAVEFNLPLLHELRLDYAGIRDELARMGAELAGAADVAQAVINIRQRKLPDPEVLGNAGSFFKNPLLPSEQIAALQASFADMPVFPGEQPGQGKLSAAWLIEQCGWKGKREGDAGISEAHALVLVNHGSASGAQLLAFARQVAESVRERYSVILEPEPRVIGAHW</sequence>
<evidence type="ECO:0000255" key="1">
    <source>
        <dbReference type="HAMAP-Rule" id="MF_00037"/>
    </source>
</evidence>
<keyword id="KW-0131">Cell cycle</keyword>
<keyword id="KW-0132">Cell division</keyword>
<keyword id="KW-0133">Cell shape</keyword>
<keyword id="KW-0961">Cell wall biogenesis/degradation</keyword>
<keyword id="KW-0963">Cytoplasm</keyword>
<keyword id="KW-0274">FAD</keyword>
<keyword id="KW-0285">Flavoprotein</keyword>
<keyword id="KW-0521">NADP</keyword>
<keyword id="KW-0560">Oxidoreductase</keyword>
<keyword id="KW-0573">Peptidoglycan synthesis</keyword>
<reference key="1">
    <citation type="journal article" date="2008" name="J. Biotechnol.">
        <title>The genome of Xanthomonas campestris pv. campestris B100 and its use for the reconstruction of metabolic pathways involved in xanthan biosynthesis.</title>
        <authorList>
            <person name="Vorhoelter F.-J."/>
            <person name="Schneiker S."/>
            <person name="Goesmann A."/>
            <person name="Krause L."/>
            <person name="Bekel T."/>
            <person name="Kaiser O."/>
            <person name="Linke B."/>
            <person name="Patschkowski T."/>
            <person name="Rueckert C."/>
            <person name="Schmid J."/>
            <person name="Sidhu V.K."/>
            <person name="Sieber V."/>
            <person name="Tauch A."/>
            <person name="Watt S.A."/>
            <person name="Weisshaar B."/>
            <person name="Becker A."/>
            <person name="Niehaus K."/>
            <person name="Puehler A."/>
        </authorList>
    </citation>
    <scope>NUCLEOTIDE SEQUENCE [LARGE SCALE GENOMIC DNA]</scope>
    <source>
        <strain>B100</strain>
    </source>
</reference>